<keyword id="KW-1185">Reference proteome</keyword>
<keyword id="KW-0687">Ribonucleoprotein</keyword>
<keyword id="KW-0689">Ribosomal protein</keyword>
<name>RL10A_CANGA</name>
<gene>
    <name type="primary">RPL10A</name>
    <name type="ordered locus">CAGL0H08976g</name>
</gene>
<organism>
    <name type="scientific">Candida glabrata (strain ATCC 2001 / BCRC 20586 / JCM 3761 / NBRC 0622 / NRRL Y-65 / CBS 138)</name>
    <name type="common">Yeast</name>
    <name type="synonym">Nakaseomyces glabratus</name>
    <dbReference type="NCBI Taxonomy" id="284593"/>
    <lineage>
        <taxon>Eukaryota</taxon>
        <taxon>Fungi</taxon>
        <taxon>Dikarya</taxon>
        <taxon>Ascomycota</taxon>
        <taxon>Saccharomycotina</taxon>
        <taxon>Saccharomycetes</taxon>
        <taxon>Saccharomycetales</taxon>
        <taxon>Saccharomycetaceae</taxon>
        <taxon>Nakaseomyces</taxon>
    </lineage>
</organism>
<sequence length="217" mass="24424">MSKITTSHVRENVKELLKYSAETKKRNFLETVELQVGLKNYDPQRDKRFSGTLKLPVCPRPNMSICIFGDAFDVDRAKSCGVDAMSVDDLKKLNKNKKLIKKLSKKYNAFIASEVLIKQVPRLLGPQLSKAGKFPTPVSHNDDLYGKVTDVRSTIKFQLKKVLCLAVAVGNVEMDEDTLVNQILMSVNFLVSLLKKNWQNVGSLVIKSTMGPAFRLY</sequence>
<evidence type="ECO:0000305" key="1"/>
<protein>
    <recommendedName>
        <fullName evidence="1">Large ribosomal subunit protein uL1</fullName>
    </recommendedName>
    <alternativeName>
        <fullName>60S ribosomal protein L10a</fullName>
    </alternativeName>
</protein>
<proteinExistence type="inferred from homology"/>
<feature type="chain" id="PRO_0000125838" description="Large ribosomal subunit protein uL1">
    <location>
        <begin position="1"/>
        <end position="217"/>
    </location>
</feature>
<comment type="similarity">
    <text evidence="1">Belongs to the universal ribosomal protein uL1 family.</text>
</comment>
<accession>Q6FRF5</accession>
<reference key="1">
    <citation type="journal article" date="2004" name="Nature">
        <title>Genome evolution in yeasts.</title>
        <authorList>
            <person name="Dujon B."/>
            <person name="Sherman D."/>
            <person name="Fischer G."/>
            <person name="Durrens P."/>
            <person name="Casaregola S."/>
            <person name="Lafontaine I."/>
            <person name="de Montigny J."/>
            <person name="Marck C."/>
            <person name="Neuveglise C."/>
            <person name="Talla E."/>
            <person name="Goffard N."/>
            <person name="Frangeul L."/>
            <person name="Aigle M."/>
            <person name="Anthouard V."/>
            <person name="Babour A."/>
            <person name="Barbe V."/>
            <person name="Barnay S."/>
            <person name="Blanchin S."/>
            <person name="Beckerich J.-M."/>
            <person name="Beyne E."/>
            <person name="Bleykasten C."/>
            <person name="Boisrame A."/>
            <person name="Boyer J."/>
            <person name="Cattolico L."/>
            <person name="Confanioleri F."/>
            <person name="de Daruvar A."/>
            <person name="Despons L."/>
            <person name="Fabre E."/>
            <person name="Fairhead C."/>
            <person name="Ferry-Dumazet H."/>
            <person name="Groppi A."/>
            <person name="Hantraye F."/>
            <person name="Hennequin C."/>
            <person name="Jauniaux N."/>
            <person name="Joyet P."/>
            <person name="Kachouri R."/>
            <person name="Kerrest A."/>
            <person name="Koszul R."/>
            <person name="Lemaire M."/>
            <person name="Lesur I."/>
            <person name="Ma L."/>
            <person name="Muller H."/>
            <person name="Nicaud J.-M."/>
            <person name="Nikolski M."/>
            <person name="Oztas S."/>
            <person name="Ozier-Kalogeropoulos O."/>
            <person name="Pellenz S."/>
            <person name="Potier S."/>
            <person name="Richard G.-F."/>
            <person name="Straub M.-L."/>
            <person name="Suleau A."/>
            <person name="Swennen D."/>
            <person name="Tekaia F."/>
            <person name="Wesolowski-Louvel M."/>
            <person name="Westhof E."/>
            <person name="Wirth B."/>
            <person name="Zeniou-Meyer M."/>
            <person name="Zivanovic Y."/>
            <person name="Bolotin-Fukuhara M."/>
            <person name="Thierry A."/>
            <person name="Bouchier C."/>
            <person name="Caudron B."/>
            <person name="Scarpelli C."/>
            <person name="Gaillardin C."/>
            <person name="Weissenbach J."/>
            <person name="Wincker P."/>
            <person name="Souciet J.-L."/>
        </authorList>
    </citation>
    <scope>NUCLEOTIDE SEQUENCE [LARGE SCALE GENOMIC DNA]</scope>
    <source>
        <strain>ATCC 2001 / BCRC 20586 / JCM 3761 / NBRC 0622 / NRRL Y-65 / CBS 138</strain>
    </source>
</reference>
<dbReference type="EMBL" id="CR380954">
    <property type="protein sequence ID" value="CAG60122.1"/>
    <property type="molecule type" value="Genomic_DNA"/>
</dbReference>
<dbReference type="RefSeq" id="XP_447189.1">
    <property type="nucleotide sequence ID" value="XM_447189.1"/>
</dbReference>
<dbReference type="SMR" id="Q6FRF5"/>
<dbReference type="FunCoup" id="Q6FRF5">
    <property type="interactions" value="1177"/>
</dbReference>
<dbReference type="STRING" id="284593.Q6FRF5"/>
<dbReference type="EnsemblFungi" id="CAGL0H08976g-T">
    <property type="protein sequence ID" value="CAGL0H08976g-T-p1"/>
    <property type="gene ID" value="CAGL0H08976g"/>
</dbReference>
<dbReference type="KEGG" id="cgr:2888728"/>
<dbReference type="CGD" id="CAL0131916">
    <property type="gene designation" value="CAGL0H08976g"/>
</dbReference>
<dbReference type="VEuPathDB" id="FungiDB:B1J91_H08976g"/>
<dbReference type="VEuPathDB" id="FungiDB:CAGL0H08976g"/>
<dbReference type="eggNOG" id="KOG1570">
    <property type="taxonomic scope" value="Eukaryota"/>
</dbReference>
<dbReference type="HOGENOM" id="CLU_062853_3_0_1"/>
<dbReference type="InParanoid" id="Q6FRF5"/>
<dbReference type="OMA" id="GPRNKMP"/>
<dbReference type="Proteomes" id="UP000002428">
    <property type="component" value="Chromosome H"/>
</dbReference>
<dbReference type="GO" id="GO:0015934">
    <property type="term" value="C:large ribosomal subunit"/>
    <property type="evidence" value="ECO:0007669"/>
    <property type="project" value="InterPro"/>
</dbReference>
<dbReference type="GO" id="GO:0003723">
    <property type="term" value="F:RNA binding"/>
    <property type="evidence" value="ECO:0007669"/>
    <property type="project" value="InterPro"/>
</dbReference>
<dbReference type="GO" id="GO:0003735">
    <property type="term" value="F:structural constituent of ribosome"/>
    <property type="evidence" value="ECO:0007669"/>
    <property type="project" value="InterPro"/>
</dbReference>
<dbReference type="GO" id="GO:0042254">
    <property type="term" value="P:ribosome biogenesis"/>
    <property type="evidence" value="ECO:0007669"/>
    <property type="project" value="UniProtKB-ARBA"/>
</dbReference>
<dbReference type="GO" id="GO:0006412">
    <property type="term" value="P:translation"/>
    <property type="evidence" value="ECO:0007669"/>
    <property type="project" value="InterPro"/>
</dbReference>
<dbReference type="CDD" id="cd00403">
    <property type="entry name" value="Ribosomal_L1"/>
    <property type="match status" value="1"/>
</dbReference>
<dbReference type="FunFam" id="3.30.190.20:FF:000006">
    <property type="entry name" value="Ribosomal protein"/>
    <property type="match status" value="1"/>
</dbReference>
<dbReference type="FunFam" id="3.40.50.790:FF:000002">
    <property type="entry name" value="Ribosomal protein"/>
    <property type="match status" value="1"/>
</dbReference>
<dbReference type="FunFam" id="3.30.190.20:FF:000009">
    <property type="entry name" value="Ribosomal protein L10a"/>
    <property type="match status" value="1"/>
</dbReference>
<dbReference type="Gene3D" id="3.30.190.20">
    <property type="match status" value="1"/>
</dbReference>
<dbReference type="Gene3D" id="3.40.50.790">
    <property type="match status" value="1"/>
</dbReference>
<dbReference type="InterPro" id="IPR050257">
    <property type="entry name" value="eL8/uL1-like"/>
</dbReference>
<dbReference type="InterPro" id="IPR002143">
    <property type="entry name" value="Ribosomal_uL1"/>
</dbReference>
<dbReference type="InterPro" id="IPR023674">
    <property type="entry name" value="Ribosomal_uL1-like"/>
</dbReference>
<dbReference type="InterPro" id="IPR028364">
    <property type="entry name" value="Ribosomal_uL1/biogenesis"/>
</dbReference>
<dbReference type="InterPro" id="IPR016095">
    <property type="entry name" value="Ribosomal_uL1_3-a/b-sand"/>
</dbReference>
<dbReference type="InterPro" id="IPR023673">
    <property type="entry name" value="Ribosomal_uL1_CS"/>
</dbReference>
<dbReference type="PANTHER" id="PTHR23105">
    <property type="entry name" value="RIBOSOMAL PROTEIN L7AE FAMILY MEMBER"/>
    <property type="match status" value="1"/>
</dbReference>
<dbReference type="Pfam" id="PF00687">
    <property type="entry name" value="Ribosomal_L1"/>
    <property type="match status" value="1"/>
</dbReference>
<dbReference type="PIRSF" id="PIRSF002155">
    <property type="entry name" value="Ribosomal_L1"/>
    <property type="match status" value="1"/>
</dbReference>
<dbReference type="SUPFAM" id="SSF56808">
    <property type="entry name" value="Ribosomal protein L1"/>
    <property type="match status" value="1"/>
</dbReference>
<dbReference type="PROSITE" id="PS01199">
    <property type="entry name" value="RIBOSOMAL_L1"/>
    <property type="match status" value="1"/>
</dbReference>